<feature type="chain" id="PRO_0000169234" description="Uncharacterized protein YffN">
    <location>
        <begin position="1"/>
        <end position="122"/>
    </location>
</feature>
<protein>
    <recommendedName>
        <fullName>Uncharacterized protein YffN</fullName>
    </recommendedName>
</protein>
<name>YFFN_ECOLI</name>
<proteinExistence type="predicted"/>
<keyword id="KW-1185">Reference proteome</keyword>
<sequence>MKHVFKYLDFAEDREHAESVATKELKLDHVEKFAIRDLANDIKERGCVELVQPGGFDELVQIYEAGGDGIEPLNCGIESRKVAIAALLRVMREPDFQCLEMVHEIIRIARDLEAPVDAPLDC</sequence>
<reference key="1">
    <citation type="journal article" date="1997" name="Science">
        <title>The complete genome sequence of Escherichia coli K-12.</title>
        <authorList>
            <person name="Blattner F.R."/>
            <person name="Plunkett G. III"/>
            <person name="Bloch C.A."/>
            <person name="Perna N.T."/>
            <person name="Burland V."/>
            <person name="Riley M."/>
            <person name="Collado-Vides J."/>
            <person name="Glasner J.D."/>
            <person name="Rode C.K."/>
            <person name="Mayhew G.F."/>
            <person name="Gregor J."/>
            <person name="Davis N.W."/>
            <person name="Kirkpatrick H.A."/>
            <person name="Goeden M.A."/>
            <person name="Rose D.J."/>
            <person name="Mau B."/>
            <person name="Shao Y."/>
        </authorList>
    </citation>
    <scope>NUCLEOTIDE SEQUENCE [LARGE SCALE GENOMIC DNA]</scope>
    <source>
        <strain>K12 / MG1655 / ATCC 47076</strain>
    </source>
</reference>
<organism>
    <name type="scientific">Escherichia coli (strain K12)</name>
    <dbReference type="NCBI Taxonomy" id="83333"/>
    <lineage>
        <taxon>Bacteria</taxon>
        <taxon>Pseudomonadati</taxon>
        <taxon>Pseudomonadota</taxon>
        <taxon>Gammaproteobacteria</taxon>
        <taxon>Enterobacterales</taxon>
        <taxon>Enterobacteriaceae</taxon>
        <taxon>Escherichia</taxon>
    </lineage>
</organism>
<dbReference type="EMBL" id="U00096">
    <property type="protein sequence ID" value="AAC75498.2"/>
    <property type="molecule type" value="Genomic_DNA"/>
</dbReference>
<dbReference type="PIR" id="D65019">
    <property type="entry name" value="D65019"/>
</dbReference>
<dbReference type="RefSeq" id="NP_416940.2">
    <property type="nucleotide sequence ID" value="NC_000913.3"/>
</dbReference>
<dbReference type="RefSeq" id="WP_000683389.1">
    <property type="nucleotide sequence ID" value="NZ_JACEFS010000004.1"/>
</dbReference>
<dbReference type="SMR" id="P76545"/>
<dbReference type="FunCoup" id="P76545">
    <property type="interactions" value="252"/>
</dbReference>
<dbReference type="STRING" id="511145.b2445"/>
<dbReference type="PaxDb" id="511145-b2445"/>
<dbReference type="EnsemblBacteria" id="AAC75498">
    <property type="protein sequence ID" value="AAC75498"/>
    <property type="gene ID" value="b2445"/>
</dbReference>
<dbReference type="GeneID" id="946930"/>
<dbReference type="KEGG" id="eco:b2445"/>
<dbReference type="KEGG" id="ecoc:C3026_13575"/>
<dbReference type="PATRIC" id="fig|83333.110.peg.3371"/>
<dbReference type="EchoBASE" id="EB3927"/>
<dbReference type="InParanoid" id="P76545"/>
<dbReference type="BioCyc" id="EcoCyc:G7275-MONOMER"/>
<dbReference type="PRO" id="PR:P76545"/>
<dbReference type="Proteomes" id="UP000000625">
    <property type="component" value="Chromosome"/>
</dbReference>
<accession>P76545</accession>
<gene>
    <name type="primary">yffN</name>
    <name type="ordered locus">b2445</name>
</gene>